<gene>
    <name type="primary">RELT</name>
    <name type="synonym">TNFRSF19L</name>
    <name type="ORF">QccE-10051</name>
</gene>
<dbReference type="EMBL" id="AB046039">
    <property type="protein sequence ID" value="BAB01621.1"/>
    <property type="molecule type" value="mRNA"/>
</dbReference>
<dbReference type="RefSeq" id="NP_001270105.1">
    <property type="nucleotide sequence ID" value="NM_001283176.1"/>
</dbReference>
<dbReference type="STRING" id="9541.ENSMFAP00000019769"/>
<dbReference type="GlyCosmos" id="Q9N092">
    <property type="glycosylation" value="1 site, No reported glycans"/>
</dbReference>
<dbReference type="eggNOG" id="ENOG502QVCC">
    <property type="taxonomic scope" value="Eukaryota"/>
</dbReference>
<dbReference type="Proteomes" id="UP000233100">
    <property type="component" value="Unplaced"/>
</dbReference>
<dbReference type="GO" id="GO:0048471">
    <property type="term" value="C:perinuclear region of cytoplasm"/>
    <property type="evidence" value="ECO:0007669"/>
    <property type="project" value="UniProtKB-SubCell"/>
</dbReference>
<dbReference type="GO" id="GO:0005886">
    <property type="term" value="C:plasma membrane"/>
    <property type="evidence" value="ECO:0007669"/>
    <property type="project" value="UniProtKB-SubCell"/>
</dbReference>
<dbReference type="GO" id="GO:0097186">
    <property type="term" value="P:amelogenesis"/>
    <property type="evidence" value="ECO:0000250"/>
    <property type="project" value="UniProtKB"/>
</dbReference>
<dbReference type="GO" id="GO:0006915">
    <property type="term" value="P:apoptotic process"/>
    <property type="evidence" value="ECO:0007669"/>
    <property type="project" value="UniProtKB-KW"/>
</dbReference>
<dbReference type="CDD" id="cd13419">
    <property type="entry name" value="TNFRSF19L"/>
    <property type="match status" value="1"/>
</dbReference>
<dbReference type="FunFam" id="2.10.50.10:FF:000039">
    <property type="entry name" value="Tumor necrosis factor receptor superfamily member 19L"/>
    <property type="match status" value="1"/>
</dbReference>
<dbReference type="Gene3D" id="2.10.50.10">
    <property type="entry name" value="Tumor Necrosis Factor Receptor, subunit A, domain 2"/>
    <property type="match status" value="1"/>
</dbReference>
<dbReference type="InterPro" id="IPR022248">
    <property type="entry name" value="TNF_rcpt_RELT"/>
</dbReference>
<dbReference type="InterPro" id="IPR001368">
    <property type="entry name" value="TNFR/NGFR_Cys_rich_reg"/>
</dbReference>
<dbReference type="InterPro" id="IPR022333">
    <property type="entry name" value="TNFR_19-like"/>
</dbReference>
<dbReference type="InterPro" id="IPR034048">
    <property type="entry name" value="TNFRSF19L_N"/>
</dbReference>
<dbReference type="PANTHER" id="PTHR47397">
    <property type="entry name" value="TUMOR NECROSIS FACTOR RECEPTOR SUPERFAMILY MEMBER 19L"/>
    <property type="match status" value="1"/>
</dbReference>
<dbReference type="PANTHER" id="PTHR47397:SF1">
    <property type="entry name" value="TUMOR NECROSIS FACTOR RECEPTOR SUPERFAMILY MEMBER 19L"/>
    <property type="match status" value="1"/>
</dbReference>
<dbReference type="Pfam" id="PF12606">
    <property type="entry name" value="RELT"/>
    <property type="match status" value="1"/>
</dbReference>
<dbReference type="PRINTS" id="PR01970">
    <property type="entry name" value="TNFACTORR19L"/>
</dbReference>
<dbReference type="SMART" id="SM00208">
    <property type="entry name" value="TNFR"/>
    <property type="match status" value="1"/>
</dbReference>
<dbReference type="SUPFAM" id="SSF57586">
    <property type="entry name" value="TNF receptor-like"/>
    <property type="match status" value="1"/>
</dbReference>
<sequence length="430" mass="45851">MKPSLLCRPLSCFLMLLPWPLATLTSTTLWQCPPGEEPDLNPGQGTLCRPCPPGTFSAAWGSSPCQPHARCSLQRRLEAQVGTATQDTLCGDCWPGWFGPWGVPRVPCQPCSWAPLGIHGCDEWGRRARRGVEVAAGASSGGETRQPGNGTRAGGPEETAAQYAVIAIVPVFCLMGLLGILVCNLLKRKGYHCTAHKEVGPGPGGGGSGINPAYRTEDVNEDTIGVLVRLITEKKENAAALEELLKEYHSKQLVQTSHRPVSKLPPAPPNVPHICPHRHHLHTVQGLASLSGPCCSRCSQKKWPEVLLSPEAVAATTSAPSFLPNPTRVPKAGAKAGRQGEITILSVGRFRVARIPEQRTGSMVSEVKTITEAGPSAGDLPDSPQPGLPAEQQALLGSGGSHTKWLKPPAENKTEENRYVVRLSESNLVI</sequence>
<evidence type="ECO:0000250" key="1"/>
<evidence type="ECO:0000250" key="2">
    <source>
        <dbReference type="UniProtKB" id="Q969Z4"/>
    </source>
</evidence>
<evidence type="ECO:0000255" key="3"/>
<evidence type="ECO:0000256" key="4">
    <source>
        <dbReference type="SAM" id="MobiDB-lite"/>
    </source>
</evidence>
<evidence type="ECO:0000305" key="5"/>
<accession>Q9N092</accession>
<proteinExistence type="evidence at transcript level"/>
<keyword id="KW-0053">Apoptosis</keyword>
<keyword id="KW-1003">Cell membrane</keyword>
<keyword id="KW-0963">Cytoplasm</keyword>
<keyword id="KW-1015">Disulfide bond</keyword>
<keyword id="KW-0325">Glycoprotein</keyword>
<keyword id="KW-0472">Membrane</keyword>
<keyword id="KW-0597">Phosphoprotein</keyword>
<keyword id="KW-0675">Receptor</keyword>
<keyword id="KW-1185">Reference proteome</keyword>
<keyword id="KW-0732">Signal</keyword>
<keyword id="KW-0812">Transmembrane</keyword>
<keyword id="KW-1133">Transmembrane helix</keyword>
<protein>
    <recommendedName>
        <fullName>Tumor necrosis factor receptor superfamily member 19L</fullName>
    </recommendedName>
    <alternativeName>
        <fullName>Receptor expressed in lymphoid tissues</fullName>
    </alternativeName>
</protein>
<comment type="function">
    <text evidence="2">May play a role in apoptosis. Induces activation of MAPK14/p38 and MAPK8/JNK MAPK cascades, when overexpressed. Involved in dental enamel formation.</text>
</comment>
<comment type="subunit">
    <text evidence="2">Interacts with RELL1, RELL2, OXSR1, PLSCR1 and STK39.</text>
</comment>
<comment type="subcellular location">
    <subcellularLocation>
        <location evidence="2">Cell membrane</location>
        <topology evidence="2">Single-pass type I membrane protein</topology>
    </subcellularLocation>
    <subcellularLocation>
        <location evidence="2">Cytoplasm</location>
    </subcellularLocation>
    <subcellularLocation>
        <location evidence="2">Cytoplasm</location>
        <location evidence="2">Perinuclear region</location>
    </subcellularLocation>
</comment>
<comment type="PTM">
    <text evidence="2">Phosphorylated in vitro by OXSR1. Phosphorylated by STK39.</text>
</comment>
<comment type="similarity">
    <text evidence="5">Belongs to the RELT family.</text>
</comment>
<name>TR19L_MACFA</name>
<feature type="signal peptide" evidence="1">
    <location>
        <begin position="1"/>
        <end position="26"/>
    </location>
</feature>
<feature type="chain" id="PRO_0000034600" description="Tumor necrosis factor receptor superfamily member 19L">
    <location>
        <begin position="27"/>
        <end position="430"/>
    </location>
</feature>
<feature type="topological domain" description="Extracellular" evidence="3">
    <location>
        <begin position="27"/>
        <end position="162"/>
    </location>
</feature>
<feature type="transmembrane region" description="Helical" evidence="3">
    <location>
        <begin position="163"/>
        <end position="183"/>
    </location>
</feature>
<feature type="topological domain" description="Cytoplasmic" evidence="3">
    <location>
        <begin position="184"/>
        <end position="430"/>
    </location>
</feature>
<feature type="repeat" description="TNFR-Cys">
    <location>
        <begin position="50"/>
        <end position="90"/>
    </location>
</feature>
<feature type="region of interest" description="Disordered" evidence="4">
    <location>
        <begin position="134"/>
        <end position="156"/>
    </location>
</feature>
<feature type="region of interest" description="Disordered" evidence="4">
    <location>
        <begin position="373"/>
        <end position="411"/>
    </location>
</feature>
<feature type="short sequence motif" description="RFRV motif; mediates interaction with STK39" evidence="2">
    <location>
        <begin position="349"/>
        <end position="352"/>
    </location>
</feature>
<feature type="compositionally biased region" description="Low complexity" evidence="4">
    <location>
        <begin position="134"/>
        <end position="143"/>
    </location>
</feature>
<feature type="modified residue" description="Phosphothreonine" evidence="2">
    <location>
        <position position="223"/>
    </location>
</feature>
<feature type="glycosylation site" description="N-linked (GlcNAc...) asparagine" evidence="3">
    <location>
        <position position="149"/>
    </location>
</feature>
<feature type="disulfide bond" evidence="1">
    <location>
        <begin position="51"/>
        <end position="65"/>
    </location>
</feature>
<feature type="disulfide bond" evidence="1">
    <location>
        <begin position="71"/>
        <end position="90"/>
    </location>
</feature>
<reference key="1">
    <citation type="journal article" date="2001" name="Gene">
        <title>Assignment of 118 novel cDNAs of cynomolgus monkey brain to human chromosomes.</title>
        <authorList>
            <person name="Osada N."/>
            <person name="Hida M."/>
            <person name="Kususda J."/>
            <person name="Tanuma R."/>
            <person name="Iseki K."/>
            <person name="Hirata M."/>
            <person name="Suto Y."/>
            <person name="Hirai M."/>
            <person name="Terao K."/>
            <person name="Suzuki Y."/>
            <person name="Sugano S."/>
            <person name="Hashimoto K."/>
        </authorList>
    </citation>
    <scope>NUCLEOTIDE SEQUENCE [LARGE SCALE MRNA]</scope>
    <source>
        <tissue>Brain cortex</tissue>
    </source>
</reference>
<reference key="2">
    <citation type="journal article" date="2001" name="Gene">
        <authorList>
            <person name="Osada N."/>
            <person name="Hida M."/>
            <person name="Kusuda J."/>
            <person name="Tanuma R."/>
            <person name="Iseki K."/>
            <person name="Hirata M."/>
            <person name="Suto Y."/>
            <person name="Hirai M."/>
            <person name="Terao K."/>
            <person name="Suzuki Y."/>
            <person name="Sugano S."/>
            <person name="Hashimoto K."/>
            <person name="Kususda J."/>
        </authorList>
    </citation>
    <scope>ERRATUM OF PUBMED:11574149</scope>
</reference>
<organism>
    <name type="scientific">Macaca fascicularis</name>
    <name type="common">Crab-eating macaque</name>
    <name type="synonym">Cynomolgus monkey</name>
    <dbReference type="NCBI Taxonomy" id="9541"/>
    <lineage>
        <taxon>Eukaryota</taxon>
        <taxon>Metazoa</taxon>
        <taxon>Chordata</taxon>
        <taxon>Craniata</taxon>
        <taxon>Vertebrata</taxon>
        <taxon>Euteleostomi</taxon>
        <taxon>Mammalia</taxon>
        <taxon>Eutheria</taxon>
        <taxon>Euarchontoglires</taxon>
        <taxon>Primates</taxon>
        <taxon>Haplorrhini</taxon>
        <taxon>Catarrhini</taxon>
        <taxon>Cercopithecidae</taxon>
        <taxon>Cercopithecinae</taxon>
        <taxon>Macaca</taxon>
    </lineage>
</organism>